<sequence>MPLSRLIIQQFRNIKACDIDLSAGFNFLIGPNGSGKTSVLEAIYLLGHGRSFKSSLTGRVIQNECDELFVHGRFLNSDQFELPIGINKQRDGSTEVKIGGQSGQKLAQLAQVLPLQLIHPEGFDLLTDGPKHRRAFIDWGVFHTEPAFYDAWGRFKRLNKQRNALLKTARSYRELSYWDQEMAHLAENISQWRALYIEQMKTVAETICQTFLPEFEIQLKYYRGWDKDTPYHEILEKNFERDQSLGYTFSGPNKADLRIKVNGTPVEDVLSRGQLKLMVCALRVAQGQHLTEMTGKQCIYLIDDFASELDSQRRKRLADCLKETGAQVFVSSITESQIADMLDDTGKLFHVEHGRIE</sequence>
<dbReference type="EMBL" id="CP000789">
    <property type="protein sequence ID" value="ABU69459.1"/>
    <property type="molecule type" value="Genomic_DNA"/>
</dbReference>
<dbReference type="RefSeq" id="WP_005426070.1">
    <property type="nucleotide sequence ID" value="NC_022269.1"/>
</dbReference>
<dbReference type="SMR" id="A7N1F1"/>
<dbReference type="KEGG" id="vha:VIBHAR_00444"/>
<dbReference type="PATRIC" id="fig|338187.25.peg.2146"/>
<dbReference type="Proteomes" id="UP000008152">
    <property type="component" value="Chromosome I"/>
</dbReference>
<dbReference type="GO" id="GO:0005737">
    <property type="term" value="C:cytoplasm"/>
    <property type="evidence" value="ECO:0007669"/>
    <property type="project" value="UniProtKB-SubCell"/>
</dbReference>
<dbReference type="GO" id="GO:0005524">
    <property type="term" value="F:ATP binding"/>
    <property type="evidence" value="ECO:0007669"/>
    <property type="project" value="UniProtKB-UniRule"/>
</dbReference>
<dbReference type="GO" id="GO:0003697">
    <property type="term" value="F:single-stranded DNA binding"/>
    <property type="evidence" value="ECO:0007669"/>
    <property type="project" value="UniProtKB-UniRule"/>
</dbReference>
<dbReference type="GO" id="GO:0006260">
    <property type="term" value="P:DNA replication"/>
    <property type="evidence" value="ECO:0007669"/>
    <property type="project" value="UniProtKB-UniRule"/>
</dbReference>
<dbReference type="GO" id="GO:0000731">
    <property type="term" value="P:DNA synthesis involved in DNA repair"/>
    <property type="evidence" value="ECO:0007669"/>
    <property type="project" value="TreeGrafter"/>
</dbReference>
<dbReference type="GO" id="GO:0006302">
    <property type="term" value="P:double-strand break repair"/>
    <property type="evidence" value="ECO:0007669"/>
    <property type="project" value="TreeGrafter"/>
</dbReference>
<dbReference type="GO" id="GO:0009432">
    <property type="term" value="P:SOS response"/>
    <property type="evidence" value="ECO:0007669"/>
    <property type="project" value="UniProtKB-UniRule"/>
</dbReference>
<dbReference type="FunFam" id="1.20.1050.90:FF:000001">
    <property type="entry name" value="DNA replication and repair protein RecF"/>
    <property type="match status" value="1"/>
</dbReference>
<dbReference type="Gene3D" id="3.40.50.300">
    <property type="entry name" value="P-loop containing nucleotide triphosphate hydrolases"/>
    <property type="match status" value="1"/>
</dbReference>
<dbReference type="Gene3D" id="1.20.1050.90">
    <property type="entry name" value="RecF/RecN/SMC, N-terminal domain"/>
    <property type="match status" value="1"/>
</dbReference>
<dbReference type="HAMAP" id="MF_00365">
    <property type="entry name" value="RecF"/>
    <property type="match status" value="1"/>
</dbReference>
<dbReference type="InterPro" id="IPR001238">
    <property type="entry name" value="DNA-binding_RecF"/>
</dbReference>
<dbReference type="InterPro" id="IPR018078">
    <property type="entry name" value="DNA-binding_RecF_CS"/>
</dbReference>
<dbReference type="InterPro" id="IPR027417">
    <property type="entry name" value="P-loop_NTPase"/>
</dbReference>
<dbReference type="InterPro" id="IPR003395">
    <property type="entry name" value="RecF/RecN/SMC_N"/>
</dbReference>
<dbReference type="InterPro" id="IPR042174">
    <property type="entry name" value="RecF_2"/>
</dbReference>
<dbReference type="NCBIfam" id="TIGR00611">
    <property type="entry name" value="recf"/>
    <property type="match status" value="1"/>
</dbReference>
<dbReference type="PANTHER" id="PTHR32182">
    <property type="entry name" value="DNA REPLICATION AND REPAIR PROTEIN RECF"/>
    <property type="match status" value="1"/>
</dbReference>
<dbReference type="PANTHER" id="PTHR32182:SF0">
    <property type="entry name" value="DNA REPLICATION AND REPAIR PROTEIN RECF"/>
    <property type="match status" value="1"/>
</dbReference>
<dbReference type="Pfam" id="PF02463">
    <property type="entry name" value="SMC_N"/>
    <property type="match status" value="1"/>
</dbReference>
<dbReference type="SUPFAM" id="SSF52540">
    <property type="entry name" value="P-loop containing nucleoside triphosphate hydrolases"/>
    <property type="match status" value="1"/>
</dbReference>
<dbReference type="PROSITE" id="PS00617">
    <property type="entry name" value="RECF_1"/>
    <property type="match status" value="1"/>
</dbReference>
<dbReference type="PROSITE" id="PS00618">
    <property type="entry name" value="RECF_2"/>
    <property type="match status" value="1"/>
</dbReference>
<comment type="function">
    <text evidence="1">The RecF protein is involved in DNA metabolism; it is required for DNA replication and normal SOS inducibility. RecF binds preferentially to single-stranded, linear DNA. It also seems to bind ATP.</text>
</comment>
<comment type="subcellular location">
    <subcellularLocation>
        <location evidence="1">Cytoplasm</location>
    </subcellularLocation>
</comment>
<comment type="similarity">
    <text evidence="1">Belongs to the RecF family.</text>
</comment>
<protein>
    <recommendedName>
        <fullName evidence="1">DNA replication and repair protein RecF</fullName>
    </recommendedName>
</protein>
<keyword id="KW-0067">ATP-binding</keyword>
<keyword id="KW-0963">Cytoplasm</keyword>
<keyword id="KW-0227">DNA damage</keyword>
<keyword id="KW-0234">DNA repair</keyword>
<keyword id="KW-0235">DNA replication</keyword>
<keyword id="KW-0238">DNA-binding</keyword>
<keyword id="KW-0547">Nucleotide-binding</keyword>
<keyword id="KW-0742">SOS response</keyword>
<evidence type="ECO:0000255" key="1">
    <source>
        <dbReference type="HAMAP-Rule" id="MF_00365"/>
    </source>
</evidence>
<name>RECF_VIBC1</name>
<gene>
    <name evidence="1" type="primary">recF</name>
    <name type="ordered locus">VIBHAR_00444</name>
</gene>
<organism>
    <name type="scientific">Vibrio campbellii (strain ATCC BAA-1116)</name>
    <dbReference type="NCBI Taxonomy" id="2902295"/>
    <lineage>
        <taxon>Bacteria</taxon>
        <taxon>Pseudomonadati</taxon>
        <taxon>Pseudomonadota</taxon>
        <taxon>Gammaproteobacteria</taxon>
        <taxon>Vibrionales</taxon>
        <taxon>Vibrionaceae</taxon>
        <taxon>Vibrio</taxon>
    </lineage>
</organism>
<proteinExistence type="inferred from homology"/>
<feature type="chain" id="PRO_1000048596" description="DNA replication and repair protein RecF">
    <location>
        <begin position="1"/>
        <end position="357"/>
    </location>
</feature>
<feature type="binding site" evidence="1">
    <location>
        <begin position="30"/>
        <end position="37"/>
    </location>
    <ligand>
        <name>ATP</name>
        <dbReference type="ChEBI" id="CHEBI:30616"/>
    </ligand>
</feature>
<accession>A7N1F1</accession>
<reference key="1">
    <citation type="submission" date="2007-08" db="EMBL/GenBank/DDBJ databases">
        <authorList>
            <consortium name="The Vibrio harveyi Genome Sequencing Project"/>
            <person name="Bassler B."/>
            <person name="Clifton S.W."/>
            <person name="Fulton L."/>
            <person name="Delehaunty K."/>
            <person name="Fronick C."/>
            <person name="Harrison M."/>
            <person name="Markivic C."/>
            <person name="Fulton R."/>
            <person name="Tin-Wollam A.-M."/>
            <person name="Shah N."/>
            <person name="Pepin K."/>
            <person name="Nash W."/>
            <person name="Thiruvilangam P."/>
            <person name="Bhonagiri V."/>
            <person name="Waters C."/>
            <person name="Tu K.C."/>
            <person name="Irgon J."/>
            <person name="Wilson R.K."/>
        </authorList>
    </citation>
    <scope>NUCLEOTIDE SEQUENCE [LARGE SCALE GENOMIC DNA]</scope>
    <source>
        <strain>ATCC BAA-1116 / BB120</strain>
    </source>
</reference>